<feature type="chain" id="PRO_1000149627" description="Crotonobetainyl-CoA reductase">
    <location>
        <begin position="1"/>
        <end position="380"/>
    </location>
</feature>
<gene>
    <name evidence="1" type="primary">caiA</name>
    <name type="ordered locus">EC55989_0039</name>
</gene>
<evidence type="ECO:0000255" key="1">
    <source>
        <dbReference type="HAMAP-Rule" id="MF_01052"/>
    </source>
</evidence>
<accession>B7L4G2</accession>
<protein>
    <recommendedName>
        <fullName evidence="1">Crotonobetainyl-CoA reductase</fullName>
        <ecNumber evidence="1">1.3.8.13</ecNumber>
    </recommendedName>
    <alternativeName>
        <fullName evidence="1">Crotonobetainyl-CoA dehydrogenase</fullName>
    </alternativeName>
</protein>
<dbReference type="EC" id="1.3.8.13" evidence="1"/>
<dbReference type="EMBL" id="CU928145">
    <property type="protein sequence ID" value="CAU95926.1"/>
    <property type="molecule type" value="Genomic_DNA"/>
</dbReference>
<dbReference type="RefSeq" id="WP_000347117.1">
    <property type="nucleotide sequence ID" value="NZ_CP028304.1"/>
</dbReference>
<dbReference type="SMR" id="B7L4G2"/>
<dbReference type="GeneID" id="93777396"/>
<dbReference type="KEGG" id="eck:EC55989_0039"/>
<dbReference type="HOGENOM" id="CLU_018204_0_2_6"/>
<dbReference type="UniPathway" id="UPA00117"/>
<dbReference type="Proteomes" id="UP000000746">
    <property type="component" value="Chromosome"/>
</dbReference>
<dbReference type="GO" id="GO:0005737">
    <property type="term" value="C:cytoplasm"/>
    <property type="evidence" value="ECO:0007669"/>
    <property type="project" value="UniProtKB-SubCell"/>
</dbReference>
<dbReference type="GO" id="GO:0003995">
    <property type="term" value="F:acyl-CoA dehydrogenase activity"/>
    <property type="evidence" value="ECO:0007669"/>
    <property type="project" value="InterPro"/>
</dbReference>
<dbReference type="GO" id="GO:0050660">
    <property type="term" value="F:flavin adenine dinucleotide binding"/>
    <property type="evidence" value="ECO:0007669"/>
    <property type="project" value="InterPro"/>
</dbReference>
<dbReference type="GO" id="GO:0009437">
    <property type="term" value="P:carnitine metabolic process"/>
    <property type="evidence" value="ECO:0007669"/>
    <property type="project" value="UniProtKB-UniRule"/>
</dbReference>
<dbReference type="CDD" id="cd00567">
    <property type="entry name" value="ACAD"/>
    <property type="match status" value="1"/>
</dbReference>
<dbReference type="FunFam" id="1.20.140.10:FF:000001">
    <property type="entry name" value="Acyl-CoA dehydrogenase"/>
    <property type="match status" value="1"/>
</dbReference>
<dbReference type="FunFam" id="2.40.110.10:FF:000002">
    <property type="entry name" value="Acyl-CoA dehydrogenase fadE12"/>
    <property type="match status" value="1"/>
</dbReference>
<dbReference type="FunFam" id="1.10.540.10:FF:000005">
    <property type="entry name" value="Crotonobetainyl-CoA reductase"/>
    <property type="match status" value="1"/>
</dbReference>
<dbReference type="Gene3D" id="1.10.540.10">
    <property type="entry name" value="Acyl-CoA dehydrogenase/oxidase, N-terminal domain"/>
    <property type="match status" value="1"/>
</dbReference>
<dbReference type="Gene3D" id="2.40.110.10">
    <property type="entry name" value="Butyryl-CoA Dehydrogenase, subunit A, domain 2"/>
    <property type="match status" value="1"/>
</dbReference>
<dbReference type="Gene3D" id="1.20.140.10">
    <property type="entry name" value="Butyryl-CoA Dehydrogenase, subunit A, domain 3"/>
    <property type="match status" value="1"/>
</dbReference>
<dbReference type="HAMAP" id="MF_01052">
    <property type="entry name" value="CaiA"/>
    <property type="match status" value="1"/>
</dbReference>
<dbReference type="InterPro" id="IPR006089">
    <property type="entry name" value="Acyl-CoA_DH_CS"/>
</dbReference>
<dbReference type="InterPro" id="IPR006091">
    <property type="entry name" value="Acyl-CoA_Oxase/DH_mid-dom"/>
</dbReference>
<dbReference type="InterPro" id="IPR046373">
    <property type="entry name" value="Acyl-CoA_Oxase/DH_mid-dom_sf"/>
</dbReference>
<dbReference type="InterPro" id="IPR036250">
    <property type="entry name" value="AcylCo_DH-like_C"/>
</dbReference>
<dbReference type="InterPro" id="IPR009075">
    <property type="entry name" value="AcylCo_DH/oxidase_C"/>
</dbReference>
<dbReference type="InterPro" id="IPR013786">
    <property type="entry name" value="AcylCoA_DH/ox_N"/>
</dbReference>
<dbReference type="InterPro" id="IPR037069">
    <property type="entry name" value="AcylCoA_DH/ox_N_sf"/>
</dbReference>
<dbReference type="InterPro" id="IPR009100">
    <property type="entry name" value="AcylCoA_DH/oxidase_NM_dom_sf"/>
</dbReference>
<dbReference type="InterPro" id="IPR023450">
    <property type="entry name" value="CaiA"/>
</dbReference>
<dbReference type="NCBIfam" id="NF002885">
    <property type="entry name" value="PRK03354.1"/>
    <property type="match status" value="1"/>
</dbReference>
<dbReference type="PANTHER" id="PTHR43884">
    <property type="entry name" value="ACYL-COA DEHYDROGENASE"/>
    <property type="match status" value="1"/>
</dbReference>
<dbReference type="PANTHER" id="PTHR43884:SF12">
    <property type="entry name" value="ISOVALERYL-COA DEHYDROGENASE, MITOCHONDRIAL-RELATED"/>
    <property type="match status" value="1"/>
</dbReference>
<dbReference type="Pfam" id="PF00441">
    <property type="entry name" value="Acyl-CoA_dh_1"/>
    <property type="match status" value="1"/>
</dbReference>
<dbReference type="Pfam" id="PF02770">
    <property type="entry name" value="Acyl-CoA_dh_M"/>
    <property type="match status" value="1"/>
</dbReference>
<dbReference type="Pfam" id="PF02771">
    <property type="entry name" value="Acyl-CoA_dh_N"/>
    <property type="match status" value="1"/>
</dbReference>
<dbReference type="PIRSF" id="PIRSF016578">
    <property type="entry name" value="HsaA"/>
    <property type="match status" value="1"/>
</dbReference>
<dbReference type="SUPFAM" id="SSF47203">
    <property type="entry name" value="Acyl-CoA dehydrogenase C-terminal domain-like"/>
    <property type="match status" value="1"/>
</dbReference>
<dbReference type="SUPFAM" id="SSF56645">
    <property type="entry name" value="Acyl-CoA dehydrogenase NM domain-like"/>
    <property type="match status" value="1"/>
</dbReference>
<dbReference type="PROSITE" id="PS00072">
    <property type="entry name" value="ACYL_COA_DH_1"/>
    <property type="match status" value="1"/>
</dbReference>
<dbReference type="PROSITE" id="PS00073">
    <property type="entry name" value="ACYL_COA_DH_2"/>
    <property type="match status" value="1"/>
</dbReference>
<comment type="function">
    <text evidence="1">Catalyzes the reduction of crotonobetainyl-CoA to gamma-butyrobetainyl-CoA.</text>
</comment>
<comment type="catalytic activity">
    <reaction evidence="1">
        <text>4-(trimethylamino)butanoyl-CoA + oxidized [electron-transfer flavoprotein] + H(+) = crotonobetainyl-CoA + reduced [electron-transfer flavoprotein]</text>
        <dbReference type="Rhea" id="RHEA:51584"/>
        <dbReference type="Rhea" id="RHEA-COMP:10685"/>
        <dbReference type="Rhea" id="RHEA-COMP:10686"/>
        <dbReference type="ChEBI" id="CHEBI:15378"/>
        <dbReference type="ChEBI" id="CHEBI:57692"/>
        <dbReference type="ChEBI" id="CHEBI:58307"/>
        <dbReference type="ChEBI" id="CHEBI:60933"/>
        <dbReference type="ChEBI" id="CHEBI:61513"/>
        <dbReference type="EC" id="1.3.8.13"/>
    </reaction>
</comment>
<comment type="cofactor">
    <cofactor evidence="1">
        <name>FAD</name>
        <dbReference type="ChEBI" id="CHEBI:57692"/>
    </cofactor>
</comment>
<comment type="pathway">
    <text evidence="1">Amine and polyamine metabolism; carnitine metabolism.</text>
</comment>
<comment type="subunit">
    <text evidence="1">Homotetramer.</text>
</comment>
<comment type="subcellular location">
    <subcellularLocation>
        <location evidence="1">Cytoplasm</location>
    </subcellularLocation>
</comment>
<comment type="similarity">
    <text evidence="1">Belongs to the acyl-CoA dehydrogenase family.</text>
</comment>
<name>CAIA_ECO55</name>
<reference key="1">
    <citation type="journal article" date="2009" name="PLoS Genet.">
        <title>Organised genome dynamics in the Escherichia coli species results in highly diverse adaptive paths.</title>
        <authorList>
            <person name="Touchon M."/>
            <person name="Hoede C."/>
            <person name="Tenaillon O."/>
            <person name="Barbe V."/>
            <person name="Baeriswyl S."/>
            <person name="Bidet P."/>
            <person name="Bingen E."/>
            <person name="Bonacorsi S."/>
            <person name="Bouchier C."/>
            <person name="Bouvet O."/>
            <person name="Calteau A."/>
            <person name="Chiapello H."/>
            <person name="Clermont O."/>
            <person name="Cruveiller S."/>
            <person name="Danchin A."/>
            <person name="Diard M."/>
            <person name="Dossat C."/>
            <person name="Karoui M.E."/>
            <person name="Frapy E."/>
            <person name="Garry L."/>
            <person name="Ghigo J.M."/>
            <person name="Gilles A.M."/>
            <person name="Johnson J."/>
            <person name="Le Bouguenec C."/>
            <person name="Lescat M."/>
            <person name="Mangenot S."/>
            <person name="Martinez-Jehanne V."/>
            <person name="Matic I."/>
            <person name="Nassif X."/>
            <person name="Oztas S."/>
            <person name="Petit M.A."/>
            <person name="Pichon C."/>
            <person name="Rouy Z."/>
            <person name="Ruf C.S."/>
            <person name="Schneider D."/>
            <person name="Tourret J."/>
            <person name="Vacherie B."/>
            <person name="Vallenet D."/>
            <person name="Medigue C."/>
            <person name="Rocha E.P.C."/>
            <person name="Denamur E."/>
        </authorList>
    </citation>
    <scope>NUCLEOTIDE SEQUENCE [LARGE SCALE GENOMIC DNA]</scope>
    <source>
        <strain>55989 / EAEC</strain>
    </source>
</reference>
<sequence length="380" mass="42558">MDFNLNDEQELFVAGIRELMASENWEAYFAECDRDSVYPERFVKALADMGIDSLLIPEEHGGLDAGFVTLAAVWMELGRLGAPTYVLYQLPGGFNTFLREGTQEQIDKIMAFRGTGKQMWNSAITEPGAGSDVGSLKTTYTRRNGKIYLNGSKCFITSSAYTPYIVVMARDGASPDKPVYTEWFVDMSKPGIKVTKLEKLGLRMDSCCEITFDDVELDEKDMFGREGNGFNRVKEEFDHERFLVALTNYGTAMCAFEDAARYANQRVQFGEAIGRFQLIQEKFAHMAIKLNSMKNMLYEAAWKADNGTITSGDAAMCKYFCANAAFEVVDSAMQVLGGVGIAGNHRISRFWRDLRVDRVSGGSDEMQILTLGRAVLKQYR</sequence>
<proteinExistence type="inferred from homology"/>
<keyword id="KW-0963">Cytoplasm</keyword>
<keyword id="KW-0274">FAD</keyword>
<keyword id="KW-0285">Flavoprotein</keyword>
<keyword id="KW-0560">Oxidoreductase</keyword>
<keyword id="KW-1185">Reference proteome</keyword>
<organism>
    <name type="scientific">Escherichia coli (strain 55989 / EAEC)</name>
    <dbReference type="NCBI Taxonomy" id="585055"/>
    <lineage>
        <taxon>Bacteria</taxon>
        <taxon>Pseudomonadati</taxon>
        <taxon>Pseudomonadota</taxon>
        <taxon>Gammaproteobacteria</taxon>
        <taxon>Enterobacterales</taxon>
        <taxon>Enterobacteriaceae</taxon>
        <taxon>Escherichia</taxon>
    </lineage>
</organism>